<feature type="chain" id="PRO_1000187810" description="Ubiquinone/menaquinone biosynthesis C-methyltransferase UbiE">
    <location>
        <begin position="1"/>
        <end position="251"/>
    </location>
</feature>
<feature type="binding site" evidence="1">
    <location>
        <position position="74"/>
    </location>
    <ligand>
        <name>S-adenosyl-L-methionine</name>
        <dbReference type="ChEBI" id="CHEBI:59789"/>
    </ligand>
</feature>
<feature type="binding site" evidence="1">
    <location>
        <position position="95"/>
    </location>
    <ligand>
        <name>S-adenosyl-L-methionine</name>
        <dbReference type="ChEBI" id="CHEBI:59789"/>
    </ligand>
</feature>
<feature type="binding site" evidence="1">
    <location>
        <begin position="123"/>
        <end position="124"/>
    </location>
    <ligand>
        <name>S-adenosyl-L-methionine</name>
        <dbReference type="ChEBI" id="CHEBI:59789"/>
    </ligand>
</feature>
<feature type="binding site" evidence="1">
    <location>
        <position position="140"/>
    </location>
    <ligand>
        <name>S-adenosyl-L-methionine</name>
        <dbReference type="ChEBI" id="CHEBI:59789"/>
    </ligand>
</feature>
<protein>
    <recommendedName>
        <fullName evidence="1">Ubiquinone/menaquinone biosynthesis C-methyltransferase UbiE</fullName>
        <ecNumber evidence="1">2.1.1.163</ecNumber>
        <ecNumber evidence="1">2.1.1.201</ecNumber>
    </recommendedName>
    <alternativeName>
        <fullName evidence="1">2-methoxy-6-polyprenyl-1,4-benzoquinol methylase</fullName>
    </alternativeName>
    <alternativeName>
        <fullName evidence="1">Demethylmenaquinone methyltransferase</fullName>
    </alternativeName>
</protein>
<organism>
    <name type="scientific">Salmonella schwarzengrund (strain CVM19633)</name>
    <dbReference type="NCBI Taxonomy" id="439843"/>
    <lineage>
        <taxon>Bacteria</taxon>
        <taxon>Pseudomonadati</taxon>
        <taxon>Pseudomonadota</taxon>
        <taxon>Gammaproteobacteria</taxon>
        <taxon>Enterobacterales</taxon>
        <taxon>Enterobacteriaceae</taxon>
        <taxon>Salmonella</taxon>
    </lineage>
</organism>
<comment type="function">
    <text evidence="1">Methyltransferase required for the conversion of demethylmenaquinol (DMKH2) to menaquinol (MKH2) and the conversion of 2-polyprenyl-6-methoxy-1,4-benzoquinol (DDMQH2) to 2-polyprenyl-3-methyl-6-methoxy-1,4-benzoquinol (DMQH2).</text>
</comment>
<comment type="catalytic activity">
    <reaction evidence="1">
        <text>a 2-demethylmenaquinol + S-adenosyl-L-methionine = a menaquinol + S-adenosyl-L-homocysteine + H(+)</text>
        <dbReference type="Rhea" id="RHEA:42640"/>
        <dbReference type="Rhea" id="RHEA-COMP:9539"/>
        <dbReference type="Rhea" id="RHEA-COMP:9563"/>
        <dbReference type="ChEBI" id="CHEBI:15378"/>
        <dbReference type="ChEBI" id="CHEBI:18151"/>
        <dbReference type="ChEBI" id="CHEBI:55437"/>
        <dbReference type="ChEBI" id="CHEBI:57856"/>
        <dbReference type="ChEBI" id="CHEBI:59789"/>
        <dbReference type="EC" id="2.1.1.163"/>
    </reaction>
</comment>
<comment type="catalytic activity">
    <reaction evidence="1">
        <text>a 2-methoxy-6-(all-trans-polyprenyl)benzene-1,4-diol + S-adenosyl-L-methionine = a 5-methoxy-2-methyl-3-(all-trans-polyprenyl)benzene-1,4-diol + S-adenosyl-L-homocysteine + H(+)</text>
        <dbReference type="Rhea" id="RHEA:28286"/>
        <dbReference type="Rhea" id="RHEA-COMP:10858"/>
        <dbReference type="Rhea" id="RHEA-COMP:10859"/>
        <dbReference type="ChEBI" id="CHEBI:15378"/>
        <dbReference type="ChEBI" id="CHEBI:57856"/>
        <dbReference type="ChEBI" id="CHEBI:59789"/>
        <dbReference type="ChEBI" id="CHEBI:84166"/>
        <dbReference type="ChEBI" id="CHEBI:84167"/>
        <dbReference type="EC" id="2.1.1.201"/>
    </reaction>
</comment>
<comment type="pathway">
    <text evidence="1">Quinol/quinone metabolism; menaquinone biosynthesis; menaquinol from 1,4-dihydroxy-2-naphthoate: step 2/2.</text>
</comment>
<comment type="pathway">
    <text evidence="1">Cofactor biosynthesis; ubiquinone biosynthesis.</text>
</comment>
<comment type="similarity">
    <text evidence="1">Belongs to the class I-like SAM-binding methyltransferase superfamily. MenG/UbiE family.</text>
</comment>
<accession>B4TNX9</accession>
<keyword id="KW-0474">Menaquinone biosynthesis</keyword>
<keyword id="KW-0489">Methyltransferase</keyword>
<keyword id="KW-0949">S-adenosyl-L-methionine</keyword>
<keyword id="KW-0808">Transferase</keyword>
<keyword id="KW-0831">Ubiquinone biosynthesis</keyword>
<sequence>MVEDSQETTHFGFQTVAKEQKADMVAHVFHSVASKYDVMNDLMSFGIHRLWKRFTIDCSGVRRGQTVLDLAGGTGDLTAKFSRMVGETGKVILADINDSMLKMGREKLRNIGVIGNVEYVQANAEALPFPDNTFDCITISFGLRNVTEKEKALRSMFRVLKPGGRLLVLEFSKPIIEPLSKAYDAYSFHILPRIGSMVANDADSYRYLAESIRMHPDQDTLKAMMQDAGFESVDYYNLTAGVVALHRGYKF</sequence>
<evidence type="ECO:0000255" key="1">
    <source>
        <dbReference type="HAMAP-Rule" id="MF_01813"/>
    </source>
</evidence>
<reference key="1">
    <citation type="journal article" date="2011" name="J. Bacteriol.">
        <title>Comparative genomics of 28 Salmonella enterica isolates: evidence for CRISPR-mediated adaptive sublineage evolution.</title>
        <authorList>
            <person name="Fricke W.F."/>
            <person name="Mammel M.K."/>
            <person name="McDermott P.F."/>
            <person name="Tartera C."/>
            <person name="White D.G."/>
            <person name="Leclerc J.E."/>
            <person name="Ravel J."/>
            <person name="Cebula T.A."/>
        </authorList>
    </citation>
    <scope>NUCLEOTIDE SEQUENCE [LARGE SCALE GENOMIC DNA]</scope>
    <source>
        <strain>CVM19633</strain>
    </source>
</reference>
<gene>
    <name evidence="1" type="primary">ubiE</name>
    <name type="ordered locus">SeSA_A4178</name>
</gene>
<dbReference type="EC" id="2.1.1.163" evidence="1"/>
<dbReference type="EC" id="2.1.1.201" evidence="1"/>
<dbReference type="EMBL" id="CP001127">
    <property type="protein sequence ID" value="ACF90837.1"/>
    <property type="molecule type" value="Genomic_DNA"/>
</dbReference>
<dbReference type="RefSeq" id="WP_000229009.1">
    <property type="nucleotide sequence ID" value="NC_011094.1"/>
</dbReference>
<dbReference type="SMR" id="B4TNX9"/>
<dbReference type="KEGG" id="sew:SeSA_A4178"/>
<dbReference type="HOGENOM" id="CLU_037990_0_0_6"/>
<dbReference type="UniPathway" id="UPA00079">
    <property type="reaction ID" value="UER00169"/>
</dbReference>
<dbReference type="UniPathway" id="UPA00232"/>
<dbReference type="Proteomes" id="UP000001865">
    <property type="component" value="Chromosome"/>
</dbReference>
<dbReference type="GO" id="GO:0008425">
    <property type="term" value="F:2-methoxy-6-polyprenyl-1,4-benzoquinol methyltransferase activity"/>
    <property type="evidence" value="ECO:0007669"/>
    <property type="project" value="UniProtKB-UniRule"/>
</dbReference>
<dbReference type="GO" id="GO:0043770">
    <property type="term" value="F:demethylmenaquinone methyltransferase activity"/>
    <property type="evidence" value="ECO:0007669"/>
    <property type="project" value="UniProtKB-UniRule"/>
</dbReference>
<dbReference type="GO" id="GO:0009060">
    <property type="term" value="P:aerobic respiration"/>
    <property type="evidence" value="ECO:0007669"/>
    <property type="project" value="UniProtKB-UniRule"/>
</dbReference>
<dbReference type="GO" id="GO:0009234">
    <property type="term" value="P:menaquinone biosynthetic process"/>
    <property type="evidence" value="ECO:0007669"/>
    <property type="project" value="UniProtKB-UniRule"/>
</dbReference>
<dbReference type="GO" id="GO:0032259">
    <property type="term" value="P:methylation"/>
    <property type="evidence" value="ECO:0007669"/>
    <property type="project" value="UniProtKB-KW"/>
</dbReference>
<dbReference type="CDD" id="cd02440">
    <property type="entry name" value="AdoMet_MTases"/>
    <property type="match status" value="1"/>
</dbReference>
<dbReference type="FunFam" id="3.40.50.150:FF:000014">
    <property type="entry name" value="Ubiquinone/menaquinone biosynthesis C-methyltransferase UbiE"/>
    <property type="match status" value="1"/>
</dbReference>
<dbReference type="Gene3D" id="3.40.50.150">
    <property type="entry name" value="Vaccinia Virus protein VP39"/>
    <property type="match status" value="1"/>
</dbReference>
<dbReference type="HAMAP" id="MF_01813">
    <property type="entry name" value="MenG_UbiE_methyltr"/>
    <property type="match status" value="1"/>
</dbReference>
<dbReference type="InterPro" id="IPR029063">
    <property type="entry name" value="SAM-dependent_MTases_sf"/>
</dbReference>
<dbReference type="InterPro" id="IPR004033">
    <property type="entry name" value="UbiE/COQ5_MeTrFase"/>
</dbReference>
<dbReference type="InterPro" id="IPR023576">
    <property type="entry name" value="UbiE/COQ5_MeTrFase_CS"/>
</dbReference>
<dbReference type="NCBIfam" id="TIGR01934">
    <property type="entry name" value="MenG_MenH_UbiE"/>
    <property type="match status" value="1"/>
</dbReference>
<dbReference type="NCBIfam" id="NF001240">
    <property type="entry name" value="PRK00216.1-1"/>
    <property type="match status" value="1"/>
</dbReference>
<dbReference type="NCBIfam" id="NF001242">
    <property type="entry name" value="PRK00216.1-3"/>
    <property type="match status" value="1"/>
</dbReference>
<dbReference type="NCBIfam" id="NF001244">
    <property type="entry name" value="PRK00216.1-5"/>
    <property type="match status" value="1"/>
</dbReference>
<dbReference type="PANTHER" id="PTHR43591:SF24">
    <property type="entry name" value="2-METHOXY-6-POLYPRENYL-1,4-BENZOQUINOL METHYLASE, MITOCHONDRIAL"/>
    <property type="match status" value="1"/>
</dbReference>
<dbReference type="PANTHER" id="PTHR43591">
    <property type="entry name" value="METHYLTRANSFERASE"/>
    <property type="match status" value="1"/>
</dbReference>
<dbReference type="Pfam" id="PF01209">
    <property type="entry name" value="Ubie_methyltran"/>
    <property type="match status" value="1"/>
</dbReference>
<dbReference type="SUPFAM" id="SSF53335">
    <property type="entry name" value="S-adenosyl-L-methionine-dependent methyltransferases"/>
    <property type="match status" value="1"/>
</dbReference>
<dbReference type="PROSITE" id="PS51608">
    <property type="entry name" value="SAM_MT_UBIE"/>
    <property type="match status" value="1"/>
</dbReference>
<dbReference type="PROSITE" id="PS01183">
    <property type="entry name" value="UBIE_1"/>
    <property type="match status" value="1"/>
</dbReference>
<dbReference type="PROSITE" id="PS01184">
    <property type="entry name" value="UBIE_2"/>
    <property type="match status" value="1"/>
</dbReference>
<proteinExistence type="inferred from homology"/>
<name>UBIE_SALSV</name>